<protein>
    <recommendedName>
        <fullName evidence="1">3-dehydroquinate dehydratase</fullName>
        <shortName evidence="1">3-dehydroquinase</shortName>
        <ecNumber evidence="1">4.2.1.10</ecNumber>
    </recommendedName>
    <alternativeName>
        <fullName evidence="1">Type II DHQase</fullName>
    </alternativeName>
</protein>
<keyword id="KW-0028">Amino-acid biosynthesis</keyword>
<keyword id="KW-0057">Aromatic amino acid biosynthesis</keyword>
<keyword id="KW-0456">Lyase</keyword>
<keyword id="KW-1185">Reference proteome</keyword>
<evidence type="ECO:0000255" key="1">
    <source>
        <dbReference type="HAMAP-Rule" id="MF_00169"/>
    </source>
</evidence>
<name>AROQ_MYCTA</name>
<proteinExistence type="inferred from homology"/>
<sequence length="147" mass="15790">MSELIVNVINGPNLGRLGRREPAVYGGTTHDELVALIEREAAELGLKAVVRQSDSEAQLLDWIHQAADAAEPVILNAGGLTHTSVALRDACAELSAPLIEVHISNVHAREEFRRHSYLSPIATGVIVGLGIQGYLLALRYLAEHVGT</sequence>
<comment type="function">
    <text evidence="1">Catalyzes a trans-dehydration via an enolate intermediate.</text>
</comment>
<comment type="catalytic activity">
    <reaction evidence="1">
        <text>3-dehydroquinate = 3-dehydroshikimate + H2O</text>
        <dbReference type="Rhea" id="RHEA:21096"/>
        <dbReference type="ChEBI" id="CHEBI:15377"/>
        <dbReference type="ChEBI" id="CHEBI:16630"/>
        <dbReference type="ChEBI" id="CHEBI:32364"/>
        <dbReference type="EC" id="4.2.1.10"/>
    </reaction>
</comment>
<comment type="pathway">
    <text evidence="1">Metabolic intermediate biosynthesis; chorismate biosynthesis; chorismate from D-erythrose 4-phosphate and phosphoenolpyruvate: step 3/7.</text>
</comment>
<comment type="subunit">
    <text evidence="1">Homododecamer.</text>
</comment>
<comment type="similarity">
    <text evidence="1">Belongs to the type-II 3-dehydroquinase family.</text>
</comment>
<organism>
    <name type="scientific">Mycobacterium tuberculosis (strain ATCC 25177 / H37Ra)</name>
    <dbReference type="NCBI Taxonomy" id="419947"/>
    <lineage>
        <taxon>Bacteria</taxon>
        <taxon>Bacillati</taxon>
        <taxon>Actinomycetota</taxon>
        <taxon>Actinomycetes</taxon>
        <taxon>Mycobacteriales</taxon>
        <taxon>Mycobacteriaceae</taxon>
        <taxon>Mycobacterium</taxon>
        <taxon>Mycobacterium tuberculosis complex</taxon>
    </lineage>
</organism>
<dbReference type="EC" id="4.2.1.10" evidence="1"/>
<dbReference type="EMBL" id="CP000611">
    <property type="protein sequence ID" value="ABQ74336.1"/>
    <property type="molecule type" value="Genomic_DNA"/>
</dbReference>
<dbReference type="RefSeq" id="WP_003413001.1">
    <property type="nucleotide sequence ID" value="NZ_CP016972.1"/>
</dbReference>
<dbReference type="SMR" id="A5U5N6"/>
<dbReference type="KEGG" id="mra:MRA_2565"/>
<dbReference type="eggNOG" id="COG0757">
    <property type="taxonomic scope" value="Bacteria"/>
</dbReference>
<dbReference type="HOGENOM" id="CLU_090968_1_0_11"/>
<dbReference type="UniPathway" id="UPA00053">
    <property type="reaction ID" value="UER00086"/>
</dbReference>
<dbReference type="Proteomes" id="UP000001988">
    <property type="component" value="Chromosome"/>
</dbReference>
<dbReference type="GO" id="GO:0003855">
    <property type="term" value="F:3-dehydroquinate dehydratase activity"/>
    <property type="evidence" value="ECO:0007669"/>
    <property type="project" value="UniProtKB-UniRule"/>
</dbReference>
<dbReference type="GO" id="GO:0008652">
    <property type="term" value="P:amino acid biosynthetic process"/>
    <property type="evidence" value="ECO:0007669"/>
    <property type="project" value="UniProtKB-KW"/>
</dbReference>
<dbReference type="GO" id="GO:0009073">
    <property type="term" value="P:aromatic amino acid family biosynthetic process"/>
    <property type="evidence" value="ECO:0007669"/>
    <property type="project" value="UniProtKB-KW"/>
</dbReference>
<dbReference type="GO" id="GO:0009423">
    <property type="term" value="P:chorismate biosynthetic process"/>
    <property type="evidence" value="ECO:0007669"/>
    <property type="project" value="UniProtKB-UniRule"/>
</dbReference>
<dbReference type="GO" id="GO:0019631">
    <property type="term" value="P:quinate catabolic process"/>
    <property type="evidence" value="ECO:0007669"/>
    <property type="project" value="TreeGrafter"/>
</dbReference>
<dbReference type="CDD" id="cd00466">
    <property type="entry name" value="DHQase_II"/>
    <property type="match status" value="1"/>
</dbReference>
<dbReference type="FunFam" id="3.40.50.9100:FF:000001">
    <property type="entry name" value="3-dehydroquinate dehydratase"/>
    <property type="match status" value="1"/>
</dbReference>
<dbReference type="Gene3D" id="3.40.50.9100">
    <property type="entry name" value="Dehydroquinase, class II"/>
    <property type="match status" value="1"/>
</dbReference>
<dbReference type="HAMAP" id="MF_00169">
    <property type="entry name" value="AroQ"/>
    <property type="match status" value="1"/>
</dbReference>
<dbReference type="InterPro" id="IPR001874">
    <property type="entry name" value="DHquinase_II"/>
</dbReference>
<dbReference type="InterPro" id="IPR018509">
    <property type="entry name" value="DHquinase_II_CS"/>
</dbReference>
<dbReference type="InterPro" id="IPR036441">
    <property type="entry name" value="DHquinase_II_sf"/>
</dbReference>
<dbReference type="NCBIfam" id="TIGR01088">
    <property type="entry name" value="aroQ"/>
    <property type="match status" value="1"/>
</dbReference>
<dbReference type="NCBIfam" id="NF003805">
    <property type="entry name" value="PRK05395.1-2"/>
    <property type="match status" value="1"/>
</dbReference>
<dbReference type="NCBIfam" id="NF003806">
    <property type="entry name" value="PRK05395.1-3"/>
    <property type="match status" value="1"/>
</dbReference>
<dbReference type="NCBIfam" id="NF003807">
    <property type="entry name" value="PRK05395.1-4"/>
    <property type="match status" value="1"/>
</dbReference>
<dbReference type="PANTHER" id="PTHR21272">
    <property type="entry name" value="CATABOLIC 3-DEHYDROQUINASE"/>
    <property type="match status" value="1"/>
</dbReference>
<dbReference type="PANTHER" id="PTHR21272:SF3">
    <property type="entry name" value="CATABOLIC 3-DEHYDROQUINASE"/>
    <property type="match status" value="1"/>
</dbReference>
<dbReference type="Pfam" id="PF01220">
    <property type="entry name" value="DHquinase_II"/>
    <property type="match status" value="1"/>
</dbReference>
<dbReference type="PIRSF" id="PIRSF001399">
    <property type="entry name" value="DHquinase_II"/>
    <property type="match status" value="1"/>
</dbReference>
<dbReference type="SUPFAM" id="SSF52304">
    <property type="entry name" value="Type II 3-dehydroquinate dehydratase"/>
    <property type="match status" value="1"/>
</dbReference>
<dbReference type="PROSITE" id="PS01029">
    <property type="entry name" value="DEHYDROQUINASE_II"/>
    <property type="match status" value="1"/>
</dbReference>
<reference key="1">
    <citation type="journal article" date="2008" name="PLoS ONE">
        <title>Genetic basis of virulence attenuation revealed by comparative genomic analysis of Mycobacterium tuberculosis strain H37Ra versus H37Rv.</title>
        <authorList>
            <person name="Zheng H."/>
            <person name="Lu L."/>
            <person name="Wang B."/>
            <person name="Pu S."/>
            <person name="Zhang X."/>
            <person name="Zhu G."/>
            <person name="Shi W."/>
            <person name="Zhang L."/>
            <person name="Wang H."/>
            <person name="Wang S."/>
            <person name="Zhao G."/>
            <person name="Zhang Y."/>
        </authorList>
    </citation>
    <scope>NUCLEOTIDE SEQUENCE [LARGE SCALE GENOMIC DNA]</scope>
    <source>
        <strain>ATCC 25177 / H37Ra</strain>
    </source>
</reference>
<gene>
    <name evidence="1" type="primary">aroQ</name>
    <name type="ordered locus">MRA_2565</name>
</gene>
<feature type="chain" id="PRO_1000023488" description="3-dehydroquinate dehydratase">
    <location>
        <begin position="1"/>
        <end position="147"/>
    </location>
</feature>
<feature type="active site" description="Proton acceptor" evidence="1">
    <location>
        <position position="25"/>
    </location>
</feature>
<feature type="active site" description="Proton donor" evidence="1">
    <location>
        <position position="102"/>
    </location>
</feature>
<feature type="binding site" evidence="1">
    <location>
        <position position="76"/>
    </location>
    <ligand>
        <name>substrate</name>
    </ligand>
</feature>
<feature type="binding site" evidence="1">
    <location>
        <position position="82"/>
    </location>
    <ligand>
        <name>substrate</name>
    </ligand>
</feature>
<feature type="binding site" evidence="1">
    <location>
        <position position="89"/>
    </location>
    <ligand>
        <name>substrate</name>
    </ligand>
</feature>
<feature type="binding site" evidence="1">
    <location>
        <begin position="103"/>
        <end position="104"/>
    </location>
    <ligand>
        <name>substrate</name>
    </ligand>
</feature>
<feature type="binding site" evidence="1">
    <location>
        <position position="113"/>
    </location>
    <ligand>
        <name>substrate</name>
    </ligand>
</feature>
<feature type="site" description="Transition state stabilizer" evidence="1">
    <location>
        <position position="20"/>
    </location>
</feature>
<accession>A5U5N6</accession>